<gene>
    <name evidence="1" type="primary">mltF</name>
    <name type="ordered locus">Sbal195_3139</name>
</gene>
<sequence length="476" mass="54652">MTRFLFALILGFLLTACQQVTVDETEFVPKKLTELRVGTLYGPQIYMTSGQGDSGFDYDMAVLFAEYLDVPLKMVPYTNRTELYEALKKNEIDLIAAGMTETPARREQFRLGPPLYRVNQVLVYREGMPAPKDISDLKGKITVIADSSFVETLTQLQKHYPTLVWDQITDKDSEELLAMIANKEIDYTIADSSSVQINRRYLPDLRSGPVLEEKLDVVWLLPPTRSDELMSQLLAFWHQEKLAGTLDHLNEKYFGHVKRFDYVDTRAFIRAIETVLPRYRQLFETHAGNLDWRKLAATSYQESHWNPHARSATGVRGMMMLTQPTAKEIGITNRLDAEESIRGGAAYLNDMINRLPESIPESQRMWFALASYNIGYAHVEDARKLAESMELNPNAWRDLKKVLPLLQKRKYYQKTRYGYARGSEAVHYVDSIRRYYDTLVWVDNQSKQQNPEEEPSDLASEEPAIPAGTLSPEQPK</sequence>
<accession>A9KWW4</accession>
<proteinExistence type="inferred from homology"/>
<organism>
    <name type="scientific">Shewanella baltica (strain OS195)</name>
    <dbReference type="NCBI Taxonomy" id="399599"/>
    <lineage>
        <taxon>Bacteria</taxon>
        <taxon>Pseudomonadati</taxon>
        <taxon>Pseudomonadota</taxon>
        <taxon>Gammaproteobacteria</taxon>
        <taxon>Alteromonadales</taxon>
        <taxon>Shewanellaceae</taxon>
        <taxon>Shewanella</taxon>
    </lineage>
</organism>
<protein>
    <recommendedName>
        <fullName evidence="1">Membrane-bound lytic murein transglycosylase F</fullName>
        <ecNumber evidence="1">4.2.2.n1</ecNumber>
    </recommendedName>
    <alternativeName>
        <fullName evidence="1">Murein lyase F</fullName>
    </alternativeName>
</protein>
<comment type="function">
    <text evidence="1">Murein-degrading enzyme that degrades murein glycan strands and insoluble, high-molecular weight murein sacculi, with the concomitant formation of a 1,6-anhydromuramoyl product. Lytic transglycosylases (LTs) play an integral role in the metabolism of the peptidoglycan (PG) sacculus. Their lytic action creates space within the PG sacculus to allow for its expansion as well as for the insertion of various structures such as secretion systems and flagella.</text>
</comment>
<comment type="catalytic activity">
    <reaction evidence="1">
        <text>Exolytic cleavage of the (1-&gt;4)-beta-glycosidic linkage between N-acetylmuramic acid (MurNAc) and N-acetylglucosamine (GlcNAc) residues in peptidoglycan, from either the reducing or the non-reducing ends of the peptidoglycan chains, with concomitant formation of a 1,6-anhydrobond in the MurNAc residue.</text>
        <dbReference type="EC" id="4.2.2.n1"/>
    </reaction>
</comment>
<comment type="subcellular location">
    <subcellularLocation>
        <location>Cell outer membrane</location>
        <topology>Peripheral membrane protein</topology>
    </subcellularLocation>
    <text evidence="1">Attached to the inner leaflet of the outer membrane.</text>
</comment>
<comment type="domain">
    <text evidence="1">The N-terminal domain does not have lytic activity and probably modulates enzymatic activity. The C-terminal domain is the catalytic active domain.</text>
</comment>
<comment type="similarity">
    <text evidence="1">In the N-terminal section; belongs to the bacterial solute-binding protein 3 family.</text>
</comment>
<comment type="similarity">
    <text evidence="1">In the C-terminal section; belongs to the transglycosylase Slt family.</text>
</comment>
<name>MLTF_SHEB9</name>
<reference key="1">
    <citation type="submission" date="2007-11" db="EMBL/GenBank/DDBJ databases">
        <title>Complete sequence of chromosome of Shewanella baltica OS195.</title>
        <authorList>
            <consortium name="US DOE Joint Genome Institute"/>
            <person name="Copeland A."/>
            <person name="Lucas S."/>
            <person name="Lapidus A."/>
            <person name="Barry K."/>
            <person name="Glavina del Rio T."/>
            <person name="Dalin E."/>
            <person name="Tice H."/>
            <person name="Pitluck S."/>
            <person name="Chain P."/>
            <person name="Malfatti S."/>
            <person name="Shin M."/>
            <person name="Vergez L."/>
            <person name="Schmutz J."/>
            <person name="Larimer F."/>
            <person name="Land M."/>
            <person name="Hauser L."/>
            <person name="Kyrpides N."/>
            <person name="Kim E."/>
            <person name="Brettar I."/>
            <person name="Rodrigues J."/>
            <person name="Konstantinidis K."/>
            <person name="Klappenbach J."/>
            <person name="Hofle M."/>
            <person name="Tiedje J."/>
            <person name="Richardson P."/>
        </authorList>
    </citation>
    <scope>NUCLEOTIDE SEQUENCE [LARGE SCALE GENOMIC DNA]</scope>
    <source>
        <strain>OS195</strain>
    </source>
</reference>
<keyword id="KW-0998">Cell outer membrane</keyword>
<keyword id="KW-0961">Cell wall biogenesis/degradation</keyword>
<keyword id="KW-0456">Lyase</keyword>
<keyword id="KW-0472">Membrane</keyword>
<keyword id="KW-0732">Signal</keyword>
<dbReference type="EC" id="4.2.2.n1" evidence="1"/>
<dbReference type="EMBL" id="CP000891">
    <property type="protein sequence ID" value="ABX50301.1"/>
    <property type="molecule type" value="Genomic_DNA"/>
</dbReference>
<dbReference type="RefSeq" id="WP_006082473.1">
    <property type="nucleotide sequence ID" value="NC_009997.1"/>
</dbReference>
<dbReference type="SMR" id="A9KWW4"/>
<dbReference type="CAZy" id="GH23">
    <property type="family name" value="Glycoside Hydrolase Family 23"/>
</dbReference>
<dbReference type="GeneID" id="11773196"/>
<dbReference type="KEGG" id="sbn:Sbal195_3139"/>
<dbReference type="HOGENOM" id="CLU_027494_0_1_6"/>
<dbReference type="Proteomes" id="UP000000770">
    <property type="component" value="Chromosome"/>
</dbReference>
<dbReference type="GO" id="GO:0009279">
    <property type="term" value="C:cell outer membrane"/>
    <property type="evidence" value="ECO:0007669"/>
    <property type="project" value="UniProtKB-SubCell"/>
</dbReference>
<dbReference type="GO" id="GO:0008933">
    <property type="term" value="F:peptidoglycan lytic transglycosylase activity"/>
    <property type="evidence" value="ECO:0007669"/>
    <property type="project" value="UniProtKB-UniRule"/>
</dbReference>
<dbReference type="GO" id="GO:0016998">
    <property type="term" value="P:cell wall macromolecule catabolic process"/>
    <property type="evidence" value="ECO:0007669"/>
    <property type="project" value="UniProtKB-UniRule"/>
</dbReference>
<dbReference type="GO" id="GO:0071555">
    <property type="term" value="P:cell wall organization"/>
    <property type="evidence" value="ECO:0007669"/>
    <property type="project" value="UniProtKB-KW"/>
</dbReference>
<dbReference type="GO" id="GO:0009253">
    <property type="term" value="P:peptidoglycan catabolic process"/>
    <property type="evidence" value="ECO:0007669"/>
    <property type="project" value="TreeGrafter"/>
</dbReference>
<dbReference type="CDD" id="cd13403">
    <property type="entry name" value="MLTF-like"/>
    <property type="match status" value="1"/>
</dbReference>
<dbReference type="CDD" id="cd01009">
    <property type="entry name" value="PBP2_YfhD_N"/>
    <property type="match status" value="1"/>
</dbReference>
<dbReference type="FunFam" id="1.10.530.10:FF:000003">
    <property type="entry name" value="Membrane-bound lytic murein transglycosylase F"/>
    <property type="match status" value="1"/>
</dbReference>
<dbReference type="Gene3D" id="1.10.530.10">
    <property type="match status" value="1"/>
</dbReference>
<dbReference type="Gene3D" id="3.40.190.10">
    <property type="entry name" value="Periplasmic binding protein-like II"/>
    <property type="match status" value="2"/>
</dbReference>
<dbReference type="HAMAP" id="MF_02016">
    <property type="entry name" value="MltF"/>
    <property type="match status" value="1"/>
</dbReference>
<dbReference type="InterPro" id="IPR023346">
    <property type="entry name" value="Lysozyme-like_dom_sf"/>
</dbReference>
<dbReference type="InterPro" id="IPR023703">
    <property type="entry name" value="MltF"/>
</dbReference>
<dbReference type="InterPro" id="IPR001638">
    <property type="entry name" value="Solute-binding_3/MltF_N"/>
</dbReference>
<dbReference type="InterPro" id="IPR008258">
    <property type="entry name" value="Transglycosylase_SLT_dom_1"/>
</dbReference>
<dbReference type="NCBIfam" id="NF008112">
    <property type="entry name" value="PRK10859.1"/>
    <property type="match status" value="1"/>
</dbReference>
<dbReference type="PANTHER" id="PTHR35936">
    <property type="entry name" value="MEMBRANE-BOUND LYTIC MUREIN TRANSGLYCOSYLASE F"/>
    <property type="match status" value="1"/>
</dbReference>
<dbReference type="PANTHER" id="PTHR35936:SF32">
    <property type="entry name" value="MEMBRANE-BOUND LYTIC MUREIN TRANSGLYCOSYLASE F"/>
    <property type="match status" value="1"/>
</dbReference>
<dbReference type="Pfam" id="PF00497">
    <property type="entry name" value="SBP_bac_3"/>
    <property type="match status" value="1"/>
</dbReference>
<dbReference type="Pfam" id="PF01464">
    <property type="entry name" value="SLT"/>
    <property type="match status" value="1"/>
</dbReference>
<dbReference type="SMART" id="SM00062">
    <property type="entry name" value="PBPb"/>
    <property type="match status" value="1"/>
</dbReference>
<dbReference type="SUPFAM" id="SSF53955">
    <property type="entry name" value="Lysozyme-like"/>
    <property type="match status" value="1"/>
</dbReference>
<dbReference type="SUPFAM" id="SSF53850">
    <property type="entry name" value="Periplasmic binding protein-like II"/>
    <property type="match status" value="1"/>
</dbReference>
<dbReference type="PROSITE" id="PS51257">
    <property type="entry name" value="PROKAR_LIPOPROTEIN"/>
    <property type="match status" value="1"/>
</dbReference>
<evidence type="ECO:0000255" key="1">
    <source>
        <dbReference type="HAMAP-Rule" id="MF_02016"/>
    </source>
</evidence>
<evidence type="ECO:0000256" key="2">
    <source>
        <dbReference type="SAM" id="MobiDB-lite"/>
    </source>
</evidence>
<feature type="signal peptide" evidence="1">
    <location>
        <begin position="1"/>
        <end position="22"/>
    </location>
</feature>
<feature type="chain" id="PRO_5000296743" description="Membrane-bound lytic murein transglycosylase F">
    <location>
        <begin position="23"/>
        <end position="476"/>
    </location>
</feature>
<feature type="region of interest" description="Non-LT domain" evidence="1">
    <location>
        <begin position="23"/>
        <end position="257"/>
    </location>
</feature>
<feature type="region of interest" description="LT domain" evidence="1">
    <location>
        <begin position="258"/>
        <end position="476"/>
    </location>
</feature>
<feature type="region of interest" description="Disordered" evidence="2">
    <location>
        <begin position="446"/>
        <end position="476"/>
    </location>
</feature>
<feature type="compositionally biased region" description="Acidic residues" evidence="2">
    <location>
        <begin position="451"/>
        <end position="460"/>
    </location>
</feature>
<feature type="active site" evidence="1">
    <location>
        <position position="302"/>
    </location>
</feature>